<gene>
    <name evidence="1" type="primary">sprT</name>
    <name type="ordered locus">ECSE_3212</name>
</gene>
<feature type="chain" id="PRO_1000133240" description="Protein SprT">
    <location>
        <begin position="1"/>
        <end position="165"/>
    </location>
</feature>
<feature type="domain" description="SprT-like" evidence="1">
    <location>
        <begin position="20"/>
        <end position="163"/>
    </location>
</feature>
<feature type="active site" evidence="1">
    <location>
        <position position="79"/>
    </location>
</feature>
<feature type="binding site" evidence="1">
    <location>
        <position position="78"/>
    </location>
    <ligand>
        <name>Zn(2+)</name>
        <dbReference type="ChEBI" id="CHEBI:29105"/>
    </ligand>
</feature>
<feature type="binding site" evidence="1">
    <location>
        <position position="82"/>
    </location>
    <ligand>
        <name>Zn(2+)</name>
        <dbReference type="ChEBI" id="CHEBI:29105"/>
    </ligand>
</feature>
<accession>B6I782</accession>
<dbReference type="EMBL" id="AP009240">
    <property type="protein sequence ID" value="BAG78736.1"/>
    <property type="molecule type" value="Genomic_DNA"/>
</dbReference>
<dbReference type="RefSeq" id="WP_000858396.1">
    <property type="nucleotide sequence ID" value="NC_011415.1"/>
</dbReference>
<dbReference type="SMR" id="B6I782"/>
<dbReference type="KEGG" id="ecy:ECSE_3212"/>
<dbReference type="HOGENOM" id="CLU_113336_0_1_6"/>
<dbReference type="Proteomes" id="UP000008199">
    <property type="component" value="Chromosome"/>
</dbReference>
<dbReference type="GO" id="GO:0005737">
    <property type="term" value="C:cytoplasm"/>
    <property type="evidence" value="ECO:0007669"/>
    <property type="project" value="UniProtKB-SubCell"/>
</dbReference>
<dbReference type="GO" id="GO:0008270">
    <property type="term" value="F:zinc ion binding"/>
    <property type="evidence" value="ECO:0007669"/>
    <property type="project" value="UniProtKB-UniRule"/>
</dbReference>
<dbReference type="GO" id="GO:0006950">
    <property type="term" value="P:response to stress"/>
    <property type="evidence" value="ECO:0007669"/>
    <property type="project" value="UniProtKB-ARBA"/>
</dbReference>
<dbReference type="Gene3D" id="3.30.2010.10">
    <property type="entry name" value="Metalloproteases ('zincins'), catalytic domain"/>
    <property type="match status" value="1"/>
</dbReference>
<dbReference type="HAMAP" id="MF_00746">
    <property type="entry name" value="SprT"/>
    <property type="match status" value="1"/>
</dbReference>
<dbReference type="InterPro" id="IPR006640">
    <property type="entry name" value="SprT-like_domain"/>
</dbReference>
<dbReference type="InterPro" id="IPR035240">
    <property type="entry name" value="SprT_Zn_ribbon"/>
</dbReference>
<dbReference type="InterPro" id="IPR023483">
    <property type="entry name" value="Uncharacterised_SprT"/>
</dbReference>
<dbReference type="NCBIfam" id="NF003421">
    <property type="entry name" value="PRK04860.1"/>
    <property type="match status" value="1"/>
</dbReference>
<dbReference type="PANTHER" id="PTHR38773">
    <property type="entry name" value="PROTEIN SPRT"/>
    <property type="match status" value="1"/>
</dbReference>
<dbReference type="PANTHER" id="PTHR38773:SF1">
    <property type="entry name" value="PROTEIN SPRT"/>
    <property type="match status" value="1"/>
</dbReference>
<dbReference type="Pfam" id="PF10263">
    <property type="entry name" value="SprT-like"/>
    <property type="match status" value="1"/>
</dbReference>
<dbReference type="Pfam" id="PF17283">
    <property type="entry name" value="Zn_ribbon_SprT"/>
    <property type="match status" value="1"/>
</dbReference>
<dbReference type="SMART" id="SM00731">
    <property type="entry name" value="SprT"/>
    <property type="match status" value="1"/>
</dbReference>
<dbReference type="PROSITE" id="PS00142">
    <property type="entry name" value="ZINC_PROTEASE"/>
    <property type="match status" value="1"/>
</dbReference>
<keyword id="KW-0963">Cytoplasm</keyword>
<keyword id="KW-0479">Metal-binding</keyword>
<keyword id="KW-0862">Zinc</keyword>
<reference key="1">
    <citation type="journal article" date="2008" name="DNA Res.">
        <title>Complete genome sequence and comparative analysis of the wild-type commensal Escherichia coli strain SE11 isolated from a healthy adult.</title>
        <authorList>
            <person name="Oshima K."/>
            <person name="Toh H."/>
            <person name="Ogura Y."/>
            <person name="Sasamoto H."/>
            <person name="Morita H."/>
            <person name="Park S.-H."/>
            <person name="Ooka T."/>
            <person name="Iyoda S."/>
            <person name="Taylor T.D."/>
            <person name="Hayashi T."/>
            <person name="Itoh K."/>
            <person name="Hattori M."/>
        </authorList>
    </citation>
    <scope>NUCLEOTIDE SEQUENCE [LARGE SCALE GENOMIC DNA]</scope>
    <source>
        <strain>SE11</strain>
    </source>
</reference>
<organism>
    <name type="scientific">Escherichia coli (strain SE11)</name>
    <dbReference type="NCBI Taxonomy" id="409438"/>
    <lineage>
        <taxon>Bacteria</taxon>
        <taxon>Pseudomonadati</taxon>
        <taxon>Pseudomonadota</taxon>
        <taxon>Gammaproteobacteria</taxon>
        <taxon>Enterobacterales</taxon>
        <taxon>Enterobacteriaceae</taxon>
        <taxon>Escherichia</taxon>
    </lineage>
</organism>
<proteinExistence type="inferred from homology"/>
<evidence type="ECO:0000255" key="1">
    <source>
        <dbReference type="HAMAP-Rule" id="MF_00746"/>
    </source>
</evidence>
<comment type="cofactor">
    <cofactor evidence="1">
        <name>Zn(2+)</name>
        <dbReference type="ChEBI" id="CHEBI:29105"/>
    </cofactor>
    <text evidence="1">Binds 1 zinc ion.</text>
</comment>
<comment type="subcellular location">
    <subcellularLocation>
        <location evidence="1">Cytoplasm</location>
    </subcellularLocation>
</comment>
<comment type="similarity">
    <text evidence="1">Belongs to the SprT family.</text>
</comment>
<name>SPRT_ECOSE</name>
<sequence>MKTSRLPIAIQQAVMRRLREKLAQANLKLGRNYPEPKLSYTQRGTSAGTAWLESYEIRLNPVLLLENSEAFIEEVVPHELAHLLVWKHFGRVAPHGKEWKWMMESVLGVPARRTHQFELQSVRRNTFPYRCKCQEHQLTVRRHNRVVRGEAVYRCVHCGEQLVAK</sequence>
<protein>
    <recommendedName>
        <fullName evidence="1">Protein SprT</fullName>
    </recommendedName>
</protein>